<protein>
    <recommendedName>
        <fullName evidence="3">Small ribosomal subunit protein uS14m</fullName>
    </recommendedName>
    <alternativeName>
        <fullName>37S ribosomal protein mrp2, mitochondrial</fullName>
    </alternativeName>
</protein>
<reference key="1">
    <citation type="journal article" date="2002" name="Nature">
        <title>The genome sequence of Schizosaccharomyces pombe.</title>
        <authorList>
            <person name="Wood V."/>
            <person name="Gwilliam R."/>
            <person name="Rajandream M.A."/>
            <person name="Lyne M.H."/>
            <person name="Lyne R."/>
            <person name="Stewart A."/>
            <person name="Sgouros J.G."/>
            <person name="Peat N."/>
            <person name="Hayles J."/>
            <person name="Baker S.G."/>
            <person name="Basham D."/>
            <person name="Bowman S."/>
            <person name="Brooks K."/>
            <person name="Brown D."/>
            <person name="Brown S."/>
            <person name="Chillingworth T."/>
            <person name="Churcher C.M."/>
            <person name="Collins M."/>
            <person name="Connor R."/>
            <person name="Cronin A."/>
            <person name="Davis P."/>
            <person name="Feltwell T."/>
            <person name="Fraser A."/>
            <person name="Gentles S."/>
            <person name="Goble A."/>
            <person name="Hamlin N."/>
            <person name="Harris D.E."/>
            <person name="Hidalgo J."/>
            <person name="Hodgson G."/>
            <person name="Holroyd S."/>
            <person name="Hornsby T."/>
            <person name="Howarth S."/>
            <person name="Huckle E.J."/>
            <person name="Hunt S."/>
            <person name="Jagels K."/>
            <person name="James K.D."/>
            <person name="Jones L."/>
            <person name="Jones M."/>
            <person name="Leather S."/>
            <person name="McDonald S."/>
            <person name="McLean J."/>
            <person name="Mooney P."/>
            <person name="Moule S."/>
            <person name="Mungall K.L."/>
            <person name="Murphy L.D."/>
            <person name="Niblett D."/>
            <person name="Odell C."/>
            <person name="Oliver K."/>
            <person name="O'Neil S."/>
            <person name="Pearson D."/>
            <person name="Quail M.A."/>
            <person name="Rabbinowitsch E."/>
            <person name="Rutherford K.M."/>
            <person name="Rutter S."/>
            <person name="Saunders D."/>
            <person name="Seeger K."/>
            <person name="Sharp S."/>
            <person name="Skelton J."/>
            <person name="Simmonds M.N."/>
            <person name="Squares R."/>
            <person name="Squares S."/>
            <person name="Stevens K."/>
            <person name="Taylor K."/>
            <person name="Taylor R.G."/>
            <person name="Tivey A."/>
            <person name="Walsh S.V."/>
            <person name="Warren T."/>
            <person name="Whitehead S."/>
            <person name="Woodward J.R."/>
            <person name="Volckaert G."/>
            <person name="Aert R."/>
            <person name="Robben J."/>
            <person name="Grymonprez B."/>
            <person name="Weltjens I."/>
            <person name="Vanstreels E."/>
            <person name="Rieger M."/>
            <person name="Schaefer M."/>
            <person name="Mueller-Auer S."/>
            <person name="Gabel C."/>
            <person name="Fuchs M."/>
            <person name="Duesterhoeft A."/>
            <person name="Fritzc C."/>
            <person name="Holzer E."/>
            <person name="Moestl D."/>
            <person name="Hilbert H."/>
            <person name="Borzym K."/>
            <person name="Langer I."/>
            <person name="Beck A."/>
            <person name="Lehrach H."/>
            <person name="Reinhardt R."/>
            <person name="Pohl T.M."/>
            <person name="Eger P."/>
            <person name="Zimmermann W."/>
            <person name="Wedler H."/>
            <person name="Wambutt R."/>
            <person name="Purnelle B."/>
            <person name="Goffeau A."/>
            <person name="Cadieu E."/>
            <person name="Dreano S."/>
            <person name="Gloux S."/>
            <person name="Lelaure V."/>
            <person name="Mottier S."/>
            <person name="Galibert F."/>
            <person name="Aves S.J."/>
            <person name="Xiang Z."/>
            <person name="Hunt C."/>
            <person name="Moore K."/>
            <person name="Hurst S.M."/>
            <person name="Lucas M."/>
            <person name="Rochet M."/>
            <person name="Gaillardin C."/>
            <person name="Tallada V.A."/>
            <person name="Garzon A."/>
            <person name="Thode G."/>
            <person name="Daga R.R."/>
            <person name="Cruzado L."/>
            <person name="Jimenez J."/>
            <person name="Sanchez M."/>
            <person name="del Rey F."/>
            <person name="Benito J."/>
            <person name="Dominguez A."/>
            <person name="Revuelta J.L."/>
            <person name="Moreno S."/>
            <person name="Armstrong J."/>
            <person name="Forsburg S.L."/>
            <person name="Cerutti L."/>
            <person name="Lowe T."/>
            <person name="McCombie W.R."/>
            <person name="Paulsen I."/>
            <person name="Potashkin J."/>
            <person name="Shpakovski G.V."/>
            <person name="Ussery D."/>
            <person name="Barrell B.G."/>
            <person name="Nurse P."/>
        </authorList>
    </citation>
    <scope>NUCLEOTIDE SEQUENCE [LARGE SCALE GENOMIC DNA]</scope>
    <source>
        <strain>972 / ATCC 24843</strain>
    </source>
</reference>
<reference key="2">
    <citation type="journal article" date="2006" name="Nat. Biotechnol.">
        <title>ORFeome cloning and global analysis of protein localization in the fission yeast Schizosaccharomyces pombe.</title>
        <authorList>
            <person name="Matsuyama A."/>
            <person name="Arai R."/>
            <person name="Yashiroda Y."/>
            <person name="Shirai A."/>
            <person name="Kamata A."/>
            <person name="Sekido S."/>
            <person name="Kobayashi Y."/>
            <person name="Hashimoto A."/>
            <person name="Hamamoto M."/>
            <person name="Hiraoka Y."/>
            <person name="Horinouchi S."/>
            <person name="Yoshida M."/>
        </authorList>
    </citation>
    <scope>SUBCELLULAR LOCATION [LARGE SCALE ANALYSIS]</scope>
</reference>
<feature type="chain" id="PRO_0000131016" description="Small ribosomal subunit protein uS14m">
    <location>
        <begin position="1"/>
        <end position="105"/>
    </location>
</feature>
<dbReference type="EMBL" id="CU329670">
    <property type="protein sequence ID" value="CAB16242.2"/>
    <property type="molecule type" value="Genomic_DNA"/>
</dbReference>
<dbReference type="PIR" id="T38300">
    <property type="entry name" value="T38300"/>
</dbReference>
<dbReference type="RefSeq" id="NP_593797.1">
    <property type="nucleotide sequence ID" value="NM_001019226.2"/>
</dbReference>
<dbReference type="SMR" id="O42859"/>
<dbReference type="ComplexPortal" id="CPX-10315">
    <property type="entry name" value="37S mitochondrial small ribosomal subunit"/>
</dbReference>
<dbReference type="FunCoup" id="O42859">
    <property type="interactions" value="303"/>
</dbReference>
<dbReference type="STRING" id="284812.O42859"/>
<dbReference type="PaxDb" id="4896-SPAC23H3.07c.1"/>
<dbReference type="EnsemblFungi" id="SPAC23H3.07c.1">
    <property type="protein sequence ID" value="SPAC23H3.07c.1:pep"/>
    <property type="gene ID" value="SPAC23H3.07c"/>
</dbReference>
<dbReference type="GeneID" id="2541862"/>
<dbReference type="KEGG" id="spo:2541862"/>
<dbReference type="PomBase" id="SPAC23H3.07c">
    <property type="gene designation" value="mrp2"/>
</dbReference>
<dbReference type="VEuPathDB" id="FungiDB:SPAC23H3.07c"/>
<dbReference type="eggNOG" id="KOG1741">
    <property type="taxonomic scope" value="Eukaryota"/>
</dbReference>
<dbReference type="HOGENOM" id="CLU_139869_2_0_1"/>
<dbReference type="InParanoid" id="O42859"/>
<dbReference type="OMA" id="FGLCRNQ"/>
<dbReference type="PhylomeDB" id="O42859"/>
<dbReference type="PRO" id="PR:O42859"/>
<dbReference type="Proteomes" id="UP000002485">
    <property type="component" value="Chromosome I"/>
</dbReference>
<dbReference type="GO" id="GO:0005763">
    <property type="term" value="C:mitochondrial small ribosomal subunit"/>
    <property type="evidence" value="ECO:0000318"/>
    <property type="project" value="GO_Central"/>
</dbReference>
<dbReference type="GO" id="GO:0005739">
    <property type="term" value="C:mitochondrion"/>
    <property type="evidence" value="ECO:0007005"/>
    <property type="project" value="PomBase"/>
</dbReference>
<dbReference type="GO" id="GO:0003735">
    <property type="term" value="F:structural constituent of ribosome"/>
    <property type="evidence" value="ECO:0000318"/>
    <property type="project" value="GO_Central"/>
</dbReference>
<dbReference type="GO" id="GO:0032543">
    <property type="term" value="P:mitochondrial translation"/>
    <property type="evidence" value="ECO:0000250"/>
    <property type="project" value="PomBase"/>
</dbReference>
<dbReference type="GO" id="GO:0006412">
    <property type="term" value="P:translation"/>
    <property type="evidence" value="ECO:0000318"/>
    <property type="project" value="GO_Central"/>
</dbReference>
<dbReference type="FunFam" id="1.10.287.1480:FF:000001">
    <property type="entry name" value="30S ribosomal protein S14"/>
    <property type="match status" value="1"/>
</dbReference>
<dbReference type="Gene3D" id="1.10.287.1480">
    <property type="match status" value="1"/>
</dbReference>
<dbReference type="InterPro" id="IPR001209">
    <property type="entry name" value="Ribosomal_uS14"/>
</dbReference>
<dbReference type="PANTHER" id="PTHR19836">
    <property type="entry name" value="30S RIBOSOMAL PROTEIN S14"/>
    <property type="match status" value="1"/>
</dbReference>
<dbReference type="PANTHER" id="PTHR19836:SF19">
    <property type="entry name" value="SMALL RIBOSOMAL SUBUNIT PROTEIN US14M"/>
    <property type="match status" value="1"/>
</dbReference>
<dbReference type="Pfam" id="PF00253">
    <property type="entry name" value="Ribosomal_S14"/>
    <property type="match status" value="1"/>
</dbReference>
<dbReference type="SUPFAM" id="SSF57716">
    <property type="entry name" value="Glucocorticoid receptor-like (DNA-binding domain)"/>
    <property type="match status" value="1"/>
</dbReference>
<name>RT02_SCHPO</name>
<accession>O42859</accession>
<keyword id="KW-0496">Mitochondrion</keyword>
<keyword id="KW-1185">Reference proteome</keyword>
<keyword id="KW-0687">Ribonucleoprotein</keyword>
<keyword id="KW-0689">Ribosomal protein</keyword>
<gene>
    <name type="primary">mrp2</name>
    <name type="ORF">SPAC23H3.07c</name>
</gene>
<sequence length="105" mass="12288">MRALGHLKHKAFRDLLCRRLFAEHEVERQSNLYIYRNPELPLRVRLEAKKRIEALPTNAHPTKIKNRCIETGRGRGVFRAFGLARFPFRLKALANKLPGVRKASW</sequence>
<evidence type="ECO:0000250" key="1">
    <source>
        <dbReference type="UniProtKB" id="P10663"/>
    </source>
</evidence>
<evidence type="ECO:0000269" key="2">
    <source>
    </source>
</evidence>
<evidence type="ECO:0000305" key="3"/>
<organism>
    <name type="scientific">Schizosaccharomyces pombe (strain 972 / ATCC 24843)</name>
    <name type="common">Fission yeast</name>
    <dbReference type="NCBI Taxonomy" id="284812"/>
    <lineage>
        <taxon>Eukaryota</taxon>
        <taxon>Fungi</taxon>
        <taxon>Dikarya</taxon>
        <taxon>Ascomycota</taxon>
        <taxon>Taphrinomycotina</taxon>
        <taxon>Schizosaccharomycetes</taxon>
        <taxon>Schizosaccharomycetales</taxon>
        <taxon>Schizosaccharomycetaceae</taxon>
        <taxon>Schizosaccharomyces</taxon>
    </lineage>
</organism>
<comment type="function">
    <text evidence="1">Component of the mitochondrial ribosome (mitoribosome), a dedicated translation machinery responsible for the synthesis of mitochondrial genome-encoded proteins, including at least some of the essential transmembrane subunits of the mitochondrial respiratory chain. The mitoribosomes are attached to the mitochondrial inner membrane and translation products are cotranslationally integrated into the membrane.</text>
</comment>
<comment type="subunit">
    <text evidence="1">Component of the mitochondrial small ribosomal subunit (mt-SSU). Mature yeast 74S mitochondrial ribosomes consist of a small (37S) and a large (54S) subunit. The 37S small subunit contains a 15S ribosomal RNA (15S mt-rRNA) and at least 32 different proteins. The 54S large subunit contains a 21S rRNA (21S mt-rRNA) and at least 45 different proteins.</text>
</comment>
<comment type="subcellular location">
    <subcellularLocation>
        <location evidence="2">Mitochondrion</location>
    </subcellularLocation>
</comment>
<comment type="similarity">
    <text evidence="3">Belongs to the universal ribosomal protein uS14 family.</text>
</comment>
<proteinExistence type="inferred from homology"/>